<reference key="1">
    <citation type="journal article" date="1999" name="Gene">
        <title>RNA editing in an untranslated region of the Ginkgo chloroplast genome.</title>
        <authorList>
            <person name="Kudla J."/>
            <person name="Bock R."/>
        </authorList>
    </citation>
    <scope>NUCLEOTIDE SEQUENCE [GENOMIC DNA]</scope>
    <scope>ABSENCE OF RNA EDITING</scope>
</reference>
<evidence type="ECO:0000255" key="1">
    <source>
        <dbReference type="HAMAP-Rule" id="MF_01305"/>
    </source>
</evidence>
<dbReference type="EMBL" id="AJ130891">
    <property type="protein sequence ID" value="CAB61494.1"/>
    <property type="molecule type" value="Genomic_DNA"/>
</dbReference>
<dbReference type="RefSeq" id="YP_005352721.1">
    <property type="nucleotide sequence ID" value="NC_016986.1"/>
</dbReference>
<dbReference type="SMR" id="Q9THZ1"/>
<dbReference type="GeneID" id="11935019"/>
<dbReference type="GO" id="GO:0009535">
    <property type="term" value="C:chloroplast thylakoid membrane"/>
    <property type="evidence" value="ECO:0007669"/>
    <property type="project" value="UniProtKB-SubCell"/>
</dbReference>
<dbReference type="GO" id="GO:0009539">
    <property type="term" value="C:photosystem II reaction center"/>
    <property type="evidence" value="ECO:0007669"/>
    <property type="project" value="InterPro"/>
</dbReference>
<dbReference type="GO" id="GO:0015979">
    <property type="term" value="P:photosynthesis"/>
    <property type="evidence" value="ECO:0007669"/>
    <property type="project" value="UniProtKB-UniRule"/>
</dbReference>
<dbReference type="Gene3D" id="6.10.250.2070">
    <property type="match status" value="1"/>
</dbReference>
<dbReference type="HAMAP" id="MF_01305">
    <property type="entry name" value="PSII_PsbJ"/>
    <property type="match status" value="1"/>
</dbReference>
<dbReference type="InterPro" id="IPR002682">
    <property type="entry name" value="PSII_PsbJ"/>
</dbReference>
<dbReference type="InterPro" id="IPR037267">
    <property type="entry name" value="PSII_PsbJ_sf"/>
</dbReference>
<dbReference type="NCBIfam" id="NF002722">
    <property type="entry name" value="PRK02565.1"/>
    <property type="match status" value="1"/>
</dbReference>
<dbReference type="PANTHER" id="PTHR34812">
    <property type="entry name" value="PHOTOSYSTEM II REACTION CENTER PROTEIN J"/>
    <property type="match status" value="1"/>
</dbReference>
<dbReference type="PANTHER" id="PTHR34812:SF3">
    <property type="entry name" value="PHOTOSYSTEM II REACTION CENTER PROTEIN J"/>
    <property type="match status" value="1"/>
</dbReference>
<dbReference type="Pfam" id="PF01788">
    <property type="entry name" value="PsbJ"/>
    <property type="match status" value="1"/>
</dbReference>
<dbReference type="SUPFAM" id="SSF161021">
    <property type="entry name" value="Photosystem II reaction center protein J, PsbJ"/>
    <property type="match status" value="1"/>
</dbReference>
<sequence length="40" mass="4197">MADTTGRIPLWLISTVTGTLVIGLMGIFFYGSYSGLGSSL</sequence>
<gene>
    <name evidence="1" type="primary">psbJ</name>
</gene>
<proteinExistence type="evidence at transcript level"/>
<comment type="function">
    <text evidence="1">One of the components of the core complex of photosystem II (PSII). PSII is a light-driven water:plastoquinone oxidoreductase that uses light energy to abstract electrons from H(2)O, generating O(2) and a proton gradient subsequently used for ATP formation. It consists of a core antenna complex that captures photons, and an electron transfer chain that converts photonic excitation into a charge separation.</text>
</comment>
<comment type="subunit">
    <text evidence="1">PSII is composed of 1 copy each of membrane proteins PsbA, PsbB, PsbC, PsbD, PsbE, PsbF, PsbH, PsbI, PsbJ, PsbK, PsbL, PsbM, PsbT, PsbX, PsbY, PsbZ, Psb30/Ycf12, at least 3 peripheral proteins of the oxygen-evolving complex and a large number of cofactors. It forms dimeric complexes.</text>
</comment>
<comment type="subcellular location">
    <subcellularLocation>
        <location evidence="1">Plastid</location>
        <location evidence="1">Chloroplast thylakoid membrane</location>
        <topology evidence="1">Single-pass membrane protein</topology>
    </subcellularLocation>
</comment>
<comment type="similarity">
    <text evidence="1">Belongs to the PsbJ family.</text>
</comment>
<accession>Q9THZ1</accession>
<geneLocation type="chloroplast"/>
<organism>
    <name type="scientific">Ginkgo biloba</name>
    <name type="common">Ginkgo</name>
    <name type="synonym">Maidenhair tree</name>
    <dbReference type="NCBI Taxonomy" id="3311"/>
    <lineage>
        <taxon>Eukaryota</taxon>
        <taxon>Viridiplantae</taxon>
        <taxon>Streptophyta</taxon>
        <taxon>Embryophyta</taxon>
        <taxon>Tracheophyta</taxon>
        <taxon>Spermatophyta</taxon>
        <taxon>Ginkgoidae</taxon>
        <taxon>Ginkgoales</taxon>
        <taxon>Ginkgoaceae</taxon>
        <taxon>Ginkgo</taxon>
    </lineage>
</organism>
<name>PSBJ_GINBI</name>
<protein>
    <recommendedName>
        <fullName evidence="1">Photosystem II reaction center protein J</fullName>
        <shortName evidence="1">PSII-J</shortName>
    </recommendedName>
</protein>
<keyword id="KW-0150">Chloroplast</keyword>
<keyword id="KW-0472">Membrane</keyword>
<keyword id="KW-0602">Photosynthesis</keyword>
<keyword id="KW-0604">Photosystem II</keyword>
<keyword id="KW-0934">Plastid</keyword>
<keyword id="KW-0674">Reaction center</keyword>
<keyword id="KW-0793">Thylakoid</keyword>
<keyword id="KW-0812">Transmembrane</keyword>
<keyword id="KW-1133">Transmembrane helix</keyword>
<feature type="chain" id="PRO_0000216590" description="Photosystem II reaction center protein J">
    <location>
        <begin position="1"/>
        <end position="40"/>
    </location>
</feature>
<feature type="transmembrane region" description="Helical" evidence="1">
    <location>
        <begin position="8"/>
        <end position="28"/>
    </location>
</feature>